<reference key="1">
    <citation type="journal article" date="1998" name="Nature">
        <title>Deciphering the biology of Mycobacterium tuberculosis from the complete genome sequence.</title>
        <authorList>
            <person name="Cole S.T."/>
            <person name="Brosch R."/>
            <person name="Parkhill J."/>
            <person name="Garnier T."/>
            <person name="Churcher C.M."/>
            <person name="Harris D.E."/>
            <person name="Gordon S.V."/>
            <person name="Eiglmeier K."/>
            <person name="Gas S."/>
            <person name="Barry C.E. III"/>
            <person name="Tekaia F."/>
            <person name="Badcock K."/>
            <person name="Basham D."/>
            <person name="Brown D."/>
            <person name="Chillingworth T."/>
            <person name="Connor R."/>
            <person name="Davies R.M."/>
            <person name="Devlin K."/>
            <person name="Feltwell T."/>
            <person name="Gentles S."/>
            <person name="Hamlin N."/>
            <person name="Holroyd S."/>
            <person name="Hornsby T."/>
            <person name="Jagels K."/>
            <person name="Krogh A."/>
            <person name="McLean J."/>
            <person name="Moule S."/>
            <person name="Murphy L.D."/>
            <person name="Oliver S."/>
            <person name="Osborne J."/>
            <person name="Quail M.A."/>
            <person name="Rajandream M.A."/>
            <person name="Rogers J."/>
            <person name="Rutter S."/>
            <person name="Seeger K."/>
            <person name="Skelton S."/>
            <person name="Squares S."/>
            <person name="Squares R."/>
            <person name="Sulston J.E."/>
            <person name="Taylor K."/>
            <person name="Whitehead S."/>
            <person name="Barrell B.G."/>
        </authorList>
    </citation>
    <scope>NUCLEOTIDE SEQUENCE [LARGE SCALE GENOMIC DNA]</scope>
    <source>
        <strain>ATCC 25618 / H37Rv</strain>
    </source>
</reference>
<reference key="2">
    <citation type="journal article" date="2011" name="Mol. Cell. Proteomics">
        <title>Proteogenomic analysis of Mycobacterium tuberculosis by high resolution mass spectrometry.</title>
        <authorList>
            <person name="Kelkar D.S."/>
            <person name="Kumar D."/>
            <person name="Kumar P."/>
            <person name="Balakrishnan L."/>
            <person name="Muthusamy B."/>
            <person name="Yadav A.K."/>
            <person name="Shrivastava P."/>
            <person name="Marimuthu A."/>
            <person name="Anand S."/>
            <person name="Sundaram H."/>
            <person name="Kingsbury R."/>
            <person name="Harsha H.C."/>
            <person name="Nair B."/>
            <person name="Prasad T.S."/>
            <person name="Chauhan D.S."/>
            <person name="Katoch K."/>
            <person name="Katoch V.M."/>
            <person name="Kumar P."/>
            <person name="Chaerkady R."/>
            <person name="Ramachandran S."/>
            <person name="Dash D."/>
            <person name="Pandey A."/>
        </authorList>
    </citation>
    <scope>IDENTIFICATION BY MASS SPECTROMETRY [LARGE SCALE ANALYSIS]</scope>
    <source>
        <strain>ATCC 25618 / H37Rv</strain>
    </source>
</reference>
<proteinExistence type="evidence at protein level"/>
<dbReference type="EC" id="2.7.1.-"/>
<dbReference type="EMBL" id="AL123456">
    <property type="protein sequence ID" value="CCP45434.1"/>
    <property type="molecule type" value="Genomic_DNA"/>
</dbReference>
<dbReference type="PIR" id="H70963">
    <property type="entry name" value="H70963"/>
</dbReference>
<dbReference type="RefSeq" id="NP_217152.1">
    <property type="nucleotide sequence ID" value="NC_000962.3"/>
</dbReference>
<dbReference type="RefSeq" id="WP_003899406.1">
    <property type="nucleotide sequence ID" value="NZ_NVQJ01000077.1"/>
</dbReference>
<dbReference type="SMR" id="P9WL55"/>
<dbReference type="STRING" id="83332.Rv2636"/>
<dbReference type="PaxDb" id="83332-Rv2636"/>
<dbReference type="DNASU" id="888196"/>
<dbReference type="GeneID" id="888196"/>
<dbReference type="KEGG" id="mtu:Rv2636"/>
<dbReference type="KEGG" id="mtv:RVBD_2636"/>
<dbReference type="PATRIC" id="fig|83332.111.peg.2940"/>
<dbReference type="TubercuList" id="Rv2636"/>
<dbReference type="eggNOG" id="COG3896">
    <property type="taxonomic scope" value="Bacteria"/>
</dbReference>
<dbReference type="InParanoid" id="P9WL55"/>
<dbReference type="OrthoDB" id="67453at2"/>
<dbReference type="Proteomes" id="UP000001584">
    <property type="component" value="Chromosome"/>
</dbReference>
<dbReference type="GO" id="GO:0005524">
    <property type="term" value="F:ATP binding"/>
    <property type="evidence" value="ECO:0007669"/>
    <property type="project" value="UniProtKB-KW"/>
</dbReference>
<dbReference type="GO" id="GO:0016740">
    <property type="term" value="F:transferase activity"/>
    <property type="evidence" value="ECO:0007669"/>
    <property type="project" value="UniProtKB-KW"/>
</dbReference>
<dbReference type="CDD" id="cd00227">
    <property type="entry name" value="CPT"/>
    <property type="match status" value="1"/>
</dbReference>
<dbReference type="Gene3D" id="3.40.50.300">
    <property type="entry name" value="P-loop containing nucleotide triphosphate hydrolases"/>
    <property type="match status" value="1"/>
</dbReference>
<dbReference type="InterPro" id="IPR012853">
    <property type="entry name" value="CPT"/>
</dbReference>
<dbReference type="InterPro" id="IPR027417">
    <property type="entry name" value="P-loop_NTPase"/>
</dbReference>
<dbReference type="Pfam" id="PF07931">
    <property type="entry name" value="CPT"/>
    <property type="match status" value="1"/>
</dbReference>
<dbReference type="PIRSF" id="PIRSF007531">
    <property type="entry name" value="CPT"/>
    <property type="match status" value="1"/>
</dbReference>
<dbReference type="SUPFAM" id="SSF52540">
    <property type="entry name" value="P-loop containing nucleoside triphosphate hydrolases"/>
    <property type="match status" value="1"/>
</dbReference>
<accession>P9WL55</accession>
<accession>L0TBU6</accession>
<accession>P65039</accession>
<accession>P71935</accession>
<organism>
    <name type="scientific">Mycobacterium tuberculosis (strain ATCC 25618 / H37Rv)</name>
    <dbReference type="NCBI Taxonomy" id="83332"/>
    <lineage>
        <taxon>Bacteria</taxon>
        <taxon>Bacillati</taxon>
        <taxon>Actinomycetota</taxon>
        <taxon>Actinomycetes</taxon>
        <taxon>Mycobacteriales</taxon>
        <taxon>Mycobacteriaceae</taxon>
        <taxon>Mycobacterium</taxon>
        <taxon>Mycobacterium tuberculosis complex</taxon>
    </lineage>
</organism>
<gene>
    <name type="ordered locus">Rv2636</name>
    <name type="ORF">MTCY441.06</name>
</gene>
<comment type="similarity">
    <text evidence="2">To S.violaceus chloramphenicol 3-O phosphotransferase.</text>
</comment>
<evidence type="ECO:0000255" key="1"/>
<evidence type="ECO:0000305" key="2"/>
<feature type="chain" id="PRO_0000104076" description="Putative O-phosphotransferase Rv2636">
    <location>
        <begin position="1"/>
        <end position="225"/>
    </location>
</feature>
<feature type="binding site" evidence="1">
    <location>
        <begin position="30"/>
        <end position="37"/>
    </location>
    <ligand>
        <name>ATP</name>
        <dbReference type="ChEBI" id="CHEBI:30616"/>
    </ligand>
</feature>
<sequence length="225" mass="25749">MINPTRARRMRYRLAAMAGMPEGKLILLNGGSSAGKTSLALAFQDLAAECWMHIGIDLFWFALPPEQLDLARVRPEYYTWDSAVEADGLEWFTVHPGPILDLAMHSRYRAIRAYLDNGMNVIADDVIWTREWLVDALRVFEGCRVWMVGVHVSDEEGARRELERGDRHPGWNRGSARAAHADAEYDFELDTTATPVHELARELHESYQACPYPMAFNRLRKRFLS</sequence>
<keyword id="KW-0067">ATP-binding</keyword>
<keyword id="KW-0547">Nucleotide-binding</keyword>
<keyword id="KW-1185">Reference proteome</keyword>
<keyword id="KW-0808">Transferase</keyword>
<name>Y2636_MYCTU</name>
<protein>
    <recommendedName>
        <fullName>Putative O-phosphotransferase Rv2636</fullName>
        <ecNumber>2.7.1.-</ecNumber>
    </recommendedName>
</protein>